<sequence length="135" mass="15109">MLLLTVVLLVGVTLAADHPTLYAPKGGSIELGVGAKQKGQYKFEWRFGNLKIVIAEMSSTNQLEIKFPDNGFQNRSEFNPTKHNLTIHNASYEDSGTYSLHQEENDGTEHTDNFKVIVQGMSLYTYLQYALISPI</sequence>
<dbReference type="EMBL" id="X17217">
    <property type="protein sequence ID" value="CAA35086.1"/>
    <property type="molecule type" value="Genomic_DNA"/>
</dbReference>
<dbReference type="EMBL" id="U46933">
    <property type="protein sequence ID" value="AAC54932.1"/>
    <property type="molecule type" value="Genomic_DNA"/>
</dbReference>
<dbReference type="PIR" id="S10004">
    <property type="entry name" value="S10004"/>
</dbReference>
<dbReference type="RefSeq" id="NP_043906.1">
    <property type="nucleotide sequence ID" value="NC_001720.1"/>
</dbReference>
<dbReference type="SMR" id="P20748"/>
<dbReference type="KEGG" id="vg:1733472"/>
<dbReference type="Proteomes" id="UP000001594">
    <property type="component" value="Segment"/>
</dbReference>
<dbReference type="Gene3D" id="2.60.40.10">
    <property type="entry name" value="Immunoglobulins"/>
    <property type="match status" value="1"/>
</dbReference>
<dbReference type="InterPro" id="IPR036179">
    <property type="entry name" value="Ig-like_dom_sf"/>
</dbReference>
<dbReference type="InterPro" id="IPR013783">
    <property type="entry name" value="Ig-like_fold"/>
</dbReference>
<dbReference type="InterPro" id="IPR003599">
    <property type="entry name" value="Ig_sub"/>
</dbReference>
<dbReference type="InterPro" id="IPR013106">
    <property type="entry name" value="Ig_V-set"/>
</dbReference>
<dbReference type="PANTHER" id="PTHR21063:SF4">
    <property type="entry name" value="CD48 ANTIGEN-RELATED"/>
    <property type="match status" value="1"/>
</dbReference>
<dbReference type="PANTHER" id="PTHR21063">
    <property type="entry name" value="LFA-3"/>
    <property type="match status" value="1"/>
</dbReference>
<dbReference type="Pfam" id="PF07686">
    <property type="entry name" value="V-set"/>
    <property type="match status" value="1"/>
</dbReference>
<dbReference type="SMART" id="SM00409">
    <property type="entry name" value="IG"/>
    <property type="match status" value="1"/>
</dbReference>
<dbReference type="SUPFAM" id="SSF48726">
    <property type="entry name" value="Immunoglobulin"/>
    <property type="match status" value="1"/>
</dbReference>
<gene>
    <name type="ORF">11</name>
</gene>
<keyword id="KW-1185">Reference proteome</keyword>
<proteinExistence type="predicted"/>
<organism>
    <name type="scientific">Fowl adenovirus A serotype 1 (strain CELO / Phelps)</name>
    <name type="common">FAdV-1</name>
    <name type="synonym">Avian adenovirus gal1 (strain Phelps)</name>
    <dbReference type="NCBI Taxonomy" id="10553"/>
    <lineage>
        <taxon>Viruses</taxon>
        <taxon>Varidnaviria</taxon>
        <taxon>Bamfordvirae</taxon>
        <taxon>Preplasmiviricota</taxon>
        <taxon>Tectiliviricetes</taxon>
        <taxon>Rowavirales</taxon>
        <taxon>Adenoviridae</taxon>
        <taxon>Aviadenovirus</taxon>
        <taxon>Fowl aviadenovirus A</taxon>
    </lineage>
</organism>
<name>YO11_ADEG1</name>
<feature type="chain" id="PRO_0000221941" description="Uncharacterized protein ORF11">
    <location>
        <begin position="1"/>
        <end position="135"/>
    </location>
</feature>
<organismHost>
    <name type="scientific">Galliformes</name>
    <dbReference type="NCBI Taxonomy" id="8976"/>
</organismHost>
<protein>
    <recommendedName>
        <fullName>Uncharacterized protein ORF11</fullName>
    </recommendedName>
</protein>
<accession>P20748</accession>
<reference key="1">
    <citation type="journal article" date="1990" name="Nucleic Acids Res.">
        <title>Sequence of an avian adenovirus (CELO) DNA fragment (0-11.2%).</title>
        <authorList>
            <person name="Akopian T.A."/>
            <person name="Kruglyak V.A."/>
            <person name="Rivkina M.B."/>
            <person name="Naroditsky B.S."/>
            <person name="Tikhonenko T.I."/>
        </authorList>
    </citation>
    <scope>NUCLEOTIDE SEQUENCE [GENOMIC DNA]</scope>
</reference>
<reference key="2">
    <citation type="journal article" date="1996" name="J. Virol.">
        <title>The complete DNA sequence and genomic organization of the avian adenovirus CELO.</title>
        <authorList>
            <person name="Chiocca S."/>
            <person name="Kurzbauer R."/>
            <person name="Schaffner G."/>
            <person name="Baker A."/>
            <person name="Mautner V."/>
            <person name="Cotten M."/>
        </authorList>
    </citation>
    <scope>NUCLEOTIDE SEQUENCE [LARGE SCALE GENOMIC DNA]</scope>
</reference>